<comment type="function">
    <text evidence="1">Activates ribosomal RNA transcription. Plays a direct role in upstream activation of rRNA promoters.</text>
</comment>
<comment type="subunit">
    <text evidence="1">Homodimer.</text>
</comment>
<comment type="similarity">
    <text evidence="1">Belongs to the transcriptional regulatory Fis family.</text>
</comment>
<organism>
    <name type="scientific">Salmonella gallinarum (strain 287/91 / NCTC 13346)</name>
    <dbReference type="NCBI Taxonomy" id="550538"/>
    <lineage>
        <taxon>Bacteria</taxon>
        <taxon>Pseudomonadati</taxon>
        <taxon>Pseudomonadota</taxon>
        <taxon>Gammaproteobacteria</taxon>
        <taxon>Enterobacterales</taxon>
        <taxon>Enterobacteriaceae</taxon>
        <taxon>Salmonella</taxon>
    </lineage>
</organism>
<accession>B5REY3</accession>
<dbReference type="EMBL" id="AM933173">
    <property type="protein sequence ID" value="CAR39073.1"/>
    <property type="molecule type" value="Genomic_DNA"/>
</dbReference>
<dbReference type="RefSeq" id="WP_000462905.1">
    <property type="nucleotide sequence ID" value="NC_011274.1"/>
</dbReference>
<dbReference type="SMR" id="B5REY3"/>
<dbReference type="GeneID" id="98390389"/>
<dbReference type="KEGG" id="seg:SG3276"/>
<dbReference type="HOGENOM" id="CLU_158040_3_0_6"/>
<dbReference type="Proteomes" id="UP000008321">
    <property type="component" value="Chromosome"/>
</dbReference>
<dbReference type="GO" id="GO:0003700">
    <property type="term" value="F:DNA-binding transcription factor activity"/>
    <property type="evidence" value="ECO:0007669"/>
    <property type="project" value="UniProtKB-UniRule"/>
</dbReference>
<dbReference type="GO" id="GO:0043565">
    <property type="term" value="F:sequence-specific DNA binding"/>
    <property type="evidence" value="ECO:0007669"/>
    <property type="project" value="InterPro"/>
</dbReference>
<dbReference type="FunFam" id="1.10.10.60:FF:000006">
    <property type="entry name" value="DNA-binding protein Fis"/>
    <property type="match status" value="1"/>
</dbReference>
<dbReference type="Gene3D" id="1.10.10.60">
    <property type="entry name" value="Homeodomain-like"/>
    <property type="match status" value="1"/>
</dbReference>
<dbReference type="HAMAP" id="MF_00166">
    <property type="entry name" value="DNA_binding_Fis"/>
    <property type="match status" value="1"/>
</dbReference>
<dbReference type="InterPro" id="IPR005412">
    <property type="entry name" value="Fis_DNA-bd"/>
</dbReference>
<dbReference type="InterPro" id="IPR009057">
    <property type="entry name" value="Homeodomain-like_sf"/>
</dbReference>
<dbReference type="InterPro" id="IPR002197">
    <property type="entry name" value="HTH_Fis"/>
</dbReference>
<dbReference type="InterPro" id="IPR050207">
    <property type="entry name" value="Trans_regulatory_Fis"/>
</dbReference>
<dbReference type="NCBIfam" id="NF001659">
    <property type="entry name" value="PRK00430.1"/>
    <property type="match status" value="1"/>
</dbReference>
<dbReference type="PANTHER" id="PTHR47918">
    <property type="entry name" value="DNA-BINDING PROTEIN FIS"/>
    <property type="match status" value="1"/>
</dbReference>
<dbReference type="PANTHER" id="PTHR47918:SF1">
    <property type="entry name" value="DNA-BINDING PROTEIN FIS"/>
    <property type="match status" value="1"/>
</dbReference>
<dbReference type="Pfam" id="PF02954">
    <property type="entry name" value="HTH_8"/>
    <property type="match status" value="1"/>
</dbReference>
<dbReference type="PIRSF" id="PIRSF002097">
    <property type="entry name" value="DNA-binding_Fis"/>
    <property type="match status" value="1"/>
</dbReference>
<dbReference type="PRINTS" id="PR01591">
    <property type="entry name" value="DNABINDNGFIS"/>
</dbReference>
<dbReference type="PRINTS" id="PR01590">
    <property type="entry name" value="HTHFIS"/>
</dbReference>
<dbReference type="SUPFAM" id="SSF46689">
    <property type="entry name" value="Homeodomain-like"/>
    <property type="match status" value="1"/>
</dbReference>
<sequence length="98" mass="11240">MFEQRVNSDVLTVSTVNSQDQVTQKPLRDSVKQALKNYFAQLNGQDVNDLYELVLAEVEQPLLDMVMQYTRGNQTRAALMMGINRGTLRKKLKKYGMN</sequence>
<reference key="1">
    <citation type="journal article" date="2008" name="Genome Res.">
        <title>Comparative genome analysis of Salmonella enteritidis PT4 and Salmonella gallinarum 287/91 provides insights into evolutionary and host adaptation pathways.</title>
        <authorList>
            <person name="Thomson N.R."/>
            <person name="Clayton D.J."/>
            <person name="Windhorst D."/>
            <person name="Vernikos G."/>
            <person name="Davidson S."/>
            <person name="Churcher C."/>
            <person name="Quail M.A."/>
            <person name="Stevens M."/>
            <person name="Jones M.A."/>
            <person name="Watson M."/>
            <person name="Barron A."/>
            <person name="Layton A."/>
            <person name="Pickard D."/>
            <person name="Kingsley R.A."/>
            <person name="Bignell A."/>
            <person name="Clark L."/>
            <person name="Harris B."/>
            <person name="Ormond D."/>
            <person name="Abdellah Z."/>
            <person name="Brooks K."/>
            <person name="Cherevach I."/>
            <person name="Chillingworth T."/>
            <person name="Woodward J."/>
            <person name="Norberczak H."/>
            <person name="Lord A."/>
            <person name="Arrowsmith C."/>
            <person name="Jagels K."/>
            <person name="Moule S."/>
            <person name="Mungall K."/>
            <person name="Saunders M."/>
            <person name="Whitehead S."/>
            <person name="Chabalgoity J.A."/>
            <person name="Maskell D."/>
            <person name="Humphreys T."/>
            <person name="Roberts M."/>
            <person name="Barrow P.A."/>
            <person name="Dougan G."/>
            <person name="Parkhill J."/>
        </authorList>
    </citation>
    <scope>NUCLEOTIDE SEQUENCE [LARGE SCALE GENOMIC DNA]</scope>
    <source>
        <strain>287/91 / NCTC 13346</strain>
    </source>
</reference>
<evidence type="ECO:0000255" key="1">
    <source>
        <dbReference type="HAMAP-Rule" id="MF_00166"/>
    </source>
</evidence>
<name>FIS_SALG2</name>
<keyword id="KW-0010">Activator</keyword>
<keyword id="KW-0238">DNA-binding</keyword>
<keyword id="KW-0804">Transcription</keyword>
<keyword id="KW-0805">Transcription regulation</keyword>
<gene>
    <name evidence="1" type="primary">fis</name>
    <name type="ordered locus">SG3276</name>
</gene>
<protein>
    <recommendedName>
        <fullName evidence="1">DNA-binding protein Fis</fullName>
    </recommendedName>
</protein>
<feature type="chain" id="PRO_1000097460" description="DNA-binding protein Fis">
    <location>
        <begin position="1"/>
        <end position="98"/>
    </location>
</feature>
<feature type="DNA-binding region" description="H-T-H motif" evidence="1">
    <location>
        <begin position="74"/>
        <end position="93"/>
    </location>
</feature>
<proteinExistence type="inferred from homology"/>